<accession>Q9LMM8</accession>
<accession>A0ME51</accession>
<accession>O23700</accession>
<keyword id="KW-0175">Coiled coil</keyword>
<keyword id="KW-0238">DNA-binding</keyword>
<keyword id="KW-0539">Nucleus</keyword>
<keyword id="KW-1185">Reference proteome</keyword>
<keyword id="KW-0804">Transcription</keyword>
<keyword id="KW-0805">Transcription regulation</keyword>
<evidence type="ECO:0000255" key="1"/>
<evidence type="ECO:0000255" key="2">
    <source>
        <dbReference type="PROSITE-ProRule" id="PRU00251"/>
    </source>
</evidence>
<evidence type="ECO:0000269" key="3">
    <source>
    </source>
</evidence>
<evidence type="ECO:0000303" key="4">
    <source>
    </source>
</evidence>
<evidence type="ECO:0000305" key="5"/>
<evidence type="ECO:0000312" key="6">
    <source>
        <dbReference type="Araport" id="AT1G01530"/>
    </source>
</evidence>
<evidence type="ECO:0000312" key="7">
    <source>
        <dbReference type="EMBL" id="AAF81311.1"/>
    </source>
</evidence>
<name>AGL28_ARATH</name>
<feature type="chain" id="PRO_0000433964" description="Agamous-like MADS-box protein AGL28">
    <location>
        <begin position="1"/>
        <end position="247"/>
    </location>
</feature>
<feature type="domain" description="MADS-box" evidence="2">
    <location>
        <begin position="6"/>
        <end position="66"/>
    </location>
</feature>
<feature type="coiled-coil region" evidence="1">
    <location>
        <begin position="91"/>
        <end position="168"/>
    </location>
</feature>
<gene>
    <name evidence="4" type="primary">AGL28</name>
    <name evidence="6" type="ordered locus">At1g01530</name>
    <name evidence="7" type="ORF">F22L4.7</name>
</gene>
<sequence length="247" mass="28030">MARKNLGRRKIELVKMTNESNLQVTFSKRRSGLFKKGSELCTLCDAEIAIIVFSPSGKAYSFGHPNVNKLLDHSLGRVIRHNNTNFAESRTKLRIQMLNESLTEVMAEKEKEQETKQSIVQNERENKDAEKWWRNSPTELNLAQSTSMKCDLEALKKEVDEKVAQLHHRNLNFYVGSSSNVAAPAAVSGGNISTNHGFFDQNGNSTSAPTLPFGFNVMNRTPAGYNSYQLQNQEVKQVHPQYWARYY</sequence>
<proteinExistence type="evidence at transcript level"/>
<comment type="function">
    <text evidence="3">Probable transcription factor that may function as a floral promoter operating upstream of known floral activators in the autonomous pathway.</text>
</comment>
<comment type="subcellular location">
    <subcellularLocation>
        <location evidence="2">Nucleus</location>
    </subcellularLocation>
</comment>
<comment type="tissue specificity">
    <text evidence="3">Expressed in roots, leaves and shoot apices.</text>
</comment>
<comment type="developmental stage">
    <text evidence="3">Expressed in the embryo at the globular stage and in endosperm nuclei and chalazal endosperm of developing seeds.</text>
</comment>
<comment type="disruption phenotype">
    <text evidence="3">No visible phenotype under normal growth conditions.</text>
</comment>
<comment type="miscellaneous">
    <text evidence="3">Plants over-expressing AGL28 show an early flowering phenotype.</text>
</comment>
<comment type="sequence caution" evidence="5">
    <conflict type="erroneous termination">
        <sequence resource="EMBL-CDS" id="ABK28380"/>
    </conflict>
    <text>Extended C-terminus.</text>
</comment>
<comment type="sequence caution" evidence="5">
    <conflict type="erroneous gene model prediction">
        <sequence resource="EMBL-CDS" id="CAA73304"/>
    </conflict>
</comment>
<dbReference type="EMBL" id="AY141231">
    <property type="protein sequence ID" value="AAN52795.1"/>
    <property type="molecule type" value="mRNA"/>
</dbReference>
<dbReference type="EMBL" id="Y12776">
    <property type="protein sequence ID" value="CAA73304.1"/>
    <property type="status" value="ALT_SEQ"/>
    <property type="molecule type" value="Genomic_DNA"/>
</dbReference>
<dbReference type="EMBL" id="AC061957">
    <property type="protein sequence ID" value="AAF81311.1"/>
    <property type="molecule type" value="Genomic_DNA"/>
</dbReference>
<dbReference type="EMBL" id="CP002684">
    <property type="protein sequence ID" value="AEE27300.1"/>
    <property type="molecule type" value="Genomic_DNA"/>
</dbReference>
<dbReference type="EMBL" id="DQ446218">
    <property type="protein sequence ID" value="ABE65591.1"/>
    <property type="molecule type" value="mRNA"/>
</dbReference>
<dbReference type="EMBL" id="DQ652819">
    <property type="protein sequence ID" value="ABK28380.1"/>
    <property type="status" value="ALT_SEQ"/>
    <property type="molecule type" value="mRNA"/>
</dbReference>
<dbReference type="EMBL" id="AB493420">
    <property type="protein sequence ID" value="BAH30258.1"/>
    <property type="molecule type" value="mRNA"/>
</dbReference>
<dbReference type="PIR" id="H86145">
    <property type="entry name" value="H86145"/>
</dbReference>
<dbReference type="RefSeq" id="NP_171660.1">
    <property type="nucleotide sequence ID" value="NM_100035.3"/>
</dbReference>
<dbReference type="SMR" id="Q9LMM8"/>
<dbReference type="FunCoup" id="Q9LMM8">
    <property type="interactions" value="23"/>
</dbReference>
<dbReference type="IntAct" id="Q9LMM8">
    <property type="interactions" value="4"/>
</dbReference>
<dbReference type="STRING" id="3702.Q9LMM8"/>
<dbReference type="PaxDb" id="3702-AT1G01530.1"/>
<dbReference type="EnsemblPlants" id="AT1G01530.1">
    <property type="protein sequence ID" value="AT1G01530.1"/>
    <property type="gene ID" value="AT1G01530"/>
</dbReference>
<dbReference type="GeneID" id="837142"/>
<dbReference type="Gramene" id="AT1G01530.1">
    <property type="protein sequence ID" value="AT1G01530.1"/>
    <property type="gene ID" value="AT1G01530"/>
</dbReference>
<dbReference type="KEGG" id="ath:AT1G01530"/>
<dbReference type="Araport" id="AT1G01530"/>
<dbReference type="TAIR" id="AT1G01530">
    <property type="gene designation" value="AGL28"/>
</dbReference>
<dbReference type="eggNOG" id="KOG0014">
    <property type="taxonomic scope" value="Eukaryota"/>
</dbReference>
<dbReference type="HOGENOM" id="CLU_053053_5_3_1"/>
<dbReference type="InParanoid" id="Q9LMM8"/>
<dbReference type="OMA" id="KMENDSH"/>
<dbReference type="PhylomeDB" id="Q9LMM8"/>
<dbReference type="PRO" id="PR:Q9LMM8"/>
<dbReference type="Proteomes" id="UP000006548">
    <property type="component" value="Chromosome 1"/>
</dbReference>
<dbReference type="ExpressionAtlas" id="Q9LMM8">
    <property type="expression patterns" value="baseline and differential"/>
</dbReference>
<dbReference type="GO" id="GO:0005634">
    <property type="term" value="C:nucleus"/>
    <property type="evidence" value="ECO:0007669"/>
    <property type="project" value="UniProtKB-SubCell"/>
</dbReference>
<dbReference type="GO" id="GO:0003700">
    <property type="term" value="F:DNA-binding transcription factor activity"/>
    <property type="evidence" value="ECO:0000250"/>
    <property type="project" value="TAIR"/>
</dbReference>
<dbReference type="GO" id="GO:0046983">
    <property type="term" value="F:protein dimerization activity"/>
    <property type="evidence" value="ECO:0007669"/>
    <property type="project" value="InterPro"/>
</dbReference>
<dbReference type="GO" id="GO:0000977">
    <property type="term" value="F:RNA polymerase II transcription regulatory region sequence-specific DNA binding"/>
    <property type="evidence" value="ECO:0007669"/>
    <property type="project" value="InterPro"/>
</dbReference>
<dbReference type="GO" id="GO:0009911">
    <property type="term" value="P:positive regulation of flower development"/>
    <property type="evidence" value="ECO:0000315"/>
    <property type="project" value="UniProtKB"/>
</dbReference>
<dbReference type="GO" id="GO:0045944">
    <property type="term" value="P:positive regulation of transcription by RNA polymerase II"/>
    <property type="evidence" value="ECO:0007669"/>
    <property type="project" value="InterPro"/>
</dbReference>
<dbReference type="CDD" id="cd00265">
    <property type="entry name" value="MADS_MEF2_like"/>
    <property type="match status" value="1"/>
</dbReference>
<dbReference type="FunFam" id="3.40.1810.10:FF:000006">
    <property type="entry name" value="Agamous-like MADS-box protein AGL62"/>
    <property type="match status" value="1"/>
</dbReference>
<dbReference type="Gene3D" id="3.40.1810.10">
    <property type="entry name" value="Transcription factor, MADS-box"/>
    <property type="match status" value="1"/>
</dbReference>
<dbReference type="InterPro" id="IPR033896">
    <property type="entry name" value="MEF2-like_N"/>
</dbReference>
<dbReference type="InterPro" id="IPR002100">
    <property type="entry name" value="TF_MADSbox"/>
</dbReference>
<dbReference type="InterPro" id="IPR036879">
    <property type="entry name" value="TF_MADSbox_sf"/>
</dbReference>
<dbReference type="PANTHER" id="PTHR11945:SF776">
    <property type="entry name" value="AGAMOUS-LIKE 50-RELATED"/>
    <property type="match status" value="1"/>
</dbReference>
<dbReference type="PANTHER" id="PTHR11945">
    <property type="entry name" value="MADS BOX PROTEIN"/>
    <property type="match status" value="1"/>
</dbReference>
<dbReference type="Pfam" id="PF00319">
    <property type="entry name" value="SRF-TF"/>
    <property type="match status" value="1"/>
</dbReference>
<dbReference type="PRINTS" id="PR00404">
    <property type="entry name" value="MADSDOMAIN"/>
</dbReference>
<dbReference type="SMART" id="SM00432">
    <property type="entry name" value="MADS"/>
    <property type="match status" value="1"/>
</dbReference>
<dbReference type="SUPFAM" id="SSF55455">
    <property type="entry name" value="SRF-like"/>
    <property type="match status" value="1"/>
</dbReference>
<dbReference type="PROSITE" id="PS50066">
    <property type="entry name" value="MADS_BOX_2"/>
    <property type="match status" value="1"/>
</dbReference>
<protein>
    <recommendedName>
        <fullName evidence="5">Agamous-like MADS-box protein AGL28</fullName>
    </recommendedName>
</protein>
<reference key="1">
    <citation type="journal article" date="2003" name="Plant Cell">
        <title>Molecular and phylogenetic analyses of the complete MADS-box transcription factor family in Arabidopsis: new openings to the MADS world.</title>
        <authorList>
            <person name="Parenicova L."/>
            <person name="de Folter S."/>
            <person name="Kieffer M."/>
            <person name="Horner D.S."/>
            <person name="Favalli C."/>
            <person name="Busscher J."/>
            <person name="Cook H.E."/>
            <person name="Ingram R.M."/>
            <person name="Kater M.M."/>
            <person name="Davies B."/>
            <person name="Angenent G.C."/>
            <person name="Colombo L."/>
        </authorList>
    </citation>
    <scope>NUCLEOTIDE SEQUENCE [MRNA]</scope>
    <scope>GENE FAMILY</scope>
    <scope>NOMENCLATURE</scope>
    <source>
        <strain>cv. Columbia</strain>
        <tissue>Flower</tissue>
    </source>
</reference>
<reference key="2">
    <citation type="journal article" date="1998" name="Gene">
        <title>Sequence analysis of a 40-kb Arabidopsis thaliana genomic region located at the top of chromosome 1.</title>
        <authorList>
            <person name="Terryn N."/>
            <person name="Gielen J."/>
            <person name="De Keyser A."/>
            <person name="Van Den Daele H."/>
            <person name="Ardiles W."/>
            <person name="Neyt P."/>
            <person name="De Clercq R."/>
            <person name="Coppieters J."/>
            <person name="Dehais P."/>
            <person name="Villarroel R."/>
            <person name="Rouze P."/>
            <person name="van Montagu M."/>
        </authorList>
    </citation>
    <scope>NUCLEOTIDE SEQUENCE [LARGE SCALE GENOMIC DNA]</scope>
    <source>
        <strain>cv. Columbia</strain>
    </source>
</reference>
<reference key="3">
    <citation type="journal article" date="2000" name="Nature">
        <title>Sequence and analysis of chromosome 1 of the plant Arabidopsis thaliana.</title>
        <authorList>
            <person name="Theologis A."/>
            <person name="Ecker J.R."/>
            <person name="Palm C.J."/>
            <person name="Federspiel N.A."/>
            <person name="Kaul S."/>
            <person name="White O."/>
            <person name="Alonso J."/>
            <person name="Altafi H."/>
            <person name="Araujo R."/>
            <person name="Bowman C.L."/>
            <person name="Brooks S.Y."/>
            <person name="Buehler E."/>
            <person name="Chan A."/>
            <person name="Chao Q."/>
            <person name="Chen H."/>
            <person name="Cheuk R.F."/>
            <person name="Chin C.W."/>
            <person name="Chung M.K."/>
            <person name="Conn L."/>
            <person name="Conway A.B."/>
            <person name="Conway A.R."/>
            <person name="Creasy T.H."/>
            <person name="Dewar K."/>
            <person name="Dunn P."/>
            <person name="Etgu P."/>
            <person name="Feldblyum T.V."/>
            <person name="Feng J.-D."/>
            <person name="Fong B."/>
            <person name="Fujii C.Y."/>
            <person name="Gill J.E."/>
            <person name="Goldsmith A.D."/>
            <person name="Haas B."/>
            <person name="Hansen N.F."/>
            <person name="Hughes B."/>
            <person name="Huizar L."/>
            <person name="Hunter J.L."/>
            <person name="Jenkins J."/>
            <person name="Johnson-Hopson C."/>
            <person name="Khan S."/>
            <person name="Khaykin E."/>
            <person name="Kim C.J."/>
            <person name="Koo H.L."/>
            <person name="Kremenetskaia I."/>
            <person name="Kurtz D.B."/>
            <person name="Kwan A."/>
            <person name="Lam B."/>
            <person name="Langin-Hooper S."/>
            <person name="Lee A."/>
            <person name="Lee J.M."/>
            <person name="Lenz C.A."/>
            <person name="Li J.H."/>
            <person name="Li Y.-P."/>
            <person name="Lin X."/>
            <person name="Liu S.X."/>
            <person name="Liu Z.A."/>
            <person name="Luros J.S."/>
            <person name="Maiti R."/>
            <person name="Marziali A."/>
            <person name="Militscher J."/>
            <person name="Miranda M."/>
            <person name="Nguyen M."/>
            <person name="Nierman W.C."/>
            <person name="Osborne B.I."/>
            <person name="Pai G."/>
            <person name="Peterson J."/>
            <person name="Pham P.K."/>
            <person name="Rizzo M."/>
            <person name="Rooney T."/>
            <person name="Rowley D."/>
            <person name="Sakano H."/>
            <person name="Salzberg S.L."/>
            <person name="Schwartz J.R."/>
            <person name="Shinn P."/>
            <person name="Southwick A.M."/>
            <person name="Sun H."/>
            <person name="Tallon L.J."/>
            <person name="Tambunga G."/>
            <person name="Toriumi M.J."/>
            <person name="Town C.D."/>
            <person name="Utterback T."/>
            <person name="Van Aken S."/>
            <person name="Vaysberg M."/>
            <person name="Vysotskaia V.S."/>
            <person name="Walker M."/>
            <person name="Wu D."/>
            <person name="Yu G."/>
            <person name="Fraser C.M."/>
            <person name="Venter J.C."/>
            <person name="Davis R.W."/>
        </authorList>
    </citation>
    <scope>NUCLEOTIDE SEQUENCE [LARGE SCALE GENOMIC DNA]</scope>
    <source>
        <strain>cv. Columbia</strain>
    </source>
</reference>
<reference key="4">
    <citation type="journal article" date="2017" name="Plant J.">
        <title>Araport11: a complete reannotation of the Arabidopsis thaliana reference genome.</title>
        <authorList>
            <person name="Cheng C.Y."/>
            <person name="Krishnakumar V."/>
            <person name="Chan A.P."/>
            <person name="Thibaud-Nissen F."/>
            <person name="Schobel S."/>
            <person name="Town C.D."/>
        </authorList>
    </citation>
    <scope>GENOME REANNOTATION</scope>
    <source>
        <strain>cv. Columbia</strain>
    </source>
</reference>
<reference key="5">
    <citation type="journal article" date="2006" name="Plant Biotechnol. J.">
        <title>Simultaneous high-throughput recombinational cloning of open reading frames in closed and open configurations.</title>
        <authorList>
            <person name="Underwood B.A."/>
            <person name="Vanderhaeghen R."/>
            <person name="Whitford R."/>
            <person name="Town C.D."/>
            <person name="Hilson P."/>
        </authorList>
    </citation>
    <scope>NUCLEOTIDE SEQUENCE [LARGE SCALE MRNA]</scope>
    <source>
        <strain>cv. Columbia</strain>
    </source>
</reference>
<reference key="6">
    <citation type="submission" date="2009-03" db="EMBL/GenBank/DDBJ databases">
        <title>ORF cloning and analysis of Arabidopsis transcription factor genes.</title>
        <authorList>
            <person name="Fujita M."/>
            <person name="Mizukado S."/>
            <person name="Seki M."/>
            <person name="Shinozaki K."/>
            <person name="Mitsuda N."/>
            <person name="Takiguchi Y."/>
            <person name="Takagi M."/>
        </authorList>
    </citation>
    <scope>NUCLEOTIDE SEQUENCE [LARGE SCALE MRNA]</scope>
</reference>
<reference key="7">
    <citation type="journal article" date="2006" name="Biochem. Biophys. Res. Commun.">
        <title>Overexpression of AGAMOUS-LIKE 28 (AGL28) promotes flowering by upregulating expression of floral promoters within the autonomous pathway.</title>
        <authorList>
            <person name="Yoo S.K."/>
            <person name="Lee J.S."/>
            <person name="Ahn J.H."/>
        </authorList>
    </citation>
    <scope>FUNCTION</scope>
    <scope>TISSUE SPECIFICITY</scope>
    <scope>DISRUPTION PHENOTYPE</scope>
</reference>
<reference key="8">
    <citation type="journal article" date="2010" name="Plant Physiol.">
        <title>An atlas of type I MADS box gene expression during female gametophyte and seed development in Arabidopsis.</title>
        <authorList>
            <person name="Bemer M."/>
            <person name="Heijmans K."/>
            <person name="Airoldi C."/>
            <person name="Davies B."/>
            <person name="Angenent G.C."/>
        </authorList>
    </citation>
    <scope>DEVELOPMENTAL STAGE</scope>
</reference>
<organism>
    <name type="scientific">Arabidopsis thaliana</name>
    <name type="common">Mouse-ear cress</name>
    <dbReference type="NCBI Taxonomy" id="3702"/>
    <lineage>
        <taxon>Eukaryota</taxon>
        <taxon>Viridiplantae</taxon>
        <taxon>Streptophyta</taxon>
        <taxon>Embryophyta</taxon>
        <taxon>Tracheophyta</taxon>
        <taxon>Spermatophyta</taxon>
        <taxon>Magnoliopsida</taxon>
        <taxon>eudicotyledons</taxon>
        <taxon>Gunneridae</taxon>
        <taxon>Pentapetalae</taxon>
        <taxon>rosids</taxon>
        <taxon>malvids</taxon>
        <taxon>Brassicales</taxon>
        <taxon>Brassicaceae</taxon>
        <taxon>Camelineae</taxon>
        <taxon>Arabidopsis</taxon>
    </lineage>
</organism>